<comment type="function">
    <text evidence="1">Splits dipeptides with a prolyl residue in the C-terminal position.</text>
</comment>
<comment type="catalytic activity">
    <reaction evidence="1">
        <text>Xaa-L-Pro dipeptide + H2O = an L-alpha-amino acid + L-proline</text>
        <dbReference type="Rhea" id="RHEA:76407"/>
        <dbReference type="ChEBI" id="CHEBI:15377"/>
        <dbReference type="ChEBI" id="CHEBI:59869"/>
        <dbReference type="ChEBI" id="CHEBI:60039"/>
        <dbReference type="ChEBI" id="CHEBI:195196"/>
        <dbReference type="EC" id="3.4.13.9"/>
    </reaction>
</comment>
<comment type="cofactor">
    <cofactor evidence="1">
        <name>Mn(2+)</name>
        <dbReference type="ChEBI" id="CHEBI:29035"/>
    </cofactor>
    <text evidence="1">Binds 2 manganese ions per subunit.</text>
</comment>
<comment type="similarity">
    <text evidence="1">Belongs to the peptidase M24B family. Bacterial-type prolidase subfamily.</text>
</comment>
<keyword id="KW-0224">Dipeptidase</keyword>
<keyword id="KW-0378">Hydrolase</keyword>
<keyword id="KW-0464">Manganese</keyword>
<keyword id="KW-0479">Metal-binding</keyword>
<keyword id="KW-0482">Metalloprotease</keyword>
<keyword id="KW-0645">Protease</keyword>
<keyword id="KW-1185">Reference proteome</keyword>
<evidence type="ECO:0000255" key="1">
    <source>
        <dbReference type="HAMAP-Rule" id="MF_01279"/>
    </source>
</evidence>
<proteinExistence type="inferred from homology"/>
<accession>A9MIX1</accession>
<reference key="1">
    <citation type="submission" date="2007-11" db="EMBL/GenBank/DDBJ databases">
        <authorList>
            <consortium name="The Salmonella enterica serovar Arizonae Genome Sequencing Project"/>
            <person name="McClelland M."/>
            <person name="Sanderson E.K."/>
            <person name="Porwollik S."/>
            <person name="Spieth J."/>
            <person name="Clifton W.S."/>
            <person name="Fulton R."/>
            <person name="Chunyan W."/>
            <person name="Wollam A."/>
            <person name="Shah N."/>
            <person name="Pepin K."/>
            <person name="Bhonagiri V."/>
            <person name="Nash W."/>
            <person name="Johnson M."/>
            <person name="Thiruvilangam P."/>
            <person name="Wilson R."/>
        </authorList>
    </citation>
    <scope>NUCLEOTIDE SEQUENCE [LARGE SCALE GENOMIC DNA]</scope>
    <source>
        <strain>ATCC BAA-731 / CDC346-86 / RSK2980</strain>
    </source>
</reference>
<sequence length="443" mass="50214">MESLAALYKNHIVTLQERTRDVLARFKLDALLIHSGELFNVFLDDHPYPFKVNPQFKAWVPVTQVPNCWLLVDGVNKPKLWFYLPVDYWHNVEPLPTSFWTEEIEVVALPKADGIGSQLPVARGNIGYIGSAPERALQLDIAANNINPKGVIDYLHYYRAYKTDYELACMREAQKMAVSGHHAAEEAFRSGMSEFDINLAYLTATGHRDTDVPYSNIVALNEHAAVLHYTKLDHQAPSEMRSFLLDAGAEYNGYAADLTRTWSAKNDNDYAQLVKDVNDEQLALIATMKAGISYVDYHIQFHQRIAKLLRKHQIITDMSEEAMVENDLTGPFMPHGIGHPLGLQVHDVAGFMQDDSGTHLAAPSKYPYLRCTRVLQPRMVLTIEPGIYFIESLLAPWREGPFSKHFNWQKIEALKPFGGIRIEDNVVIHENGVENMTRDLKLA</sequence>
<dbReference type="EC" id="3.4.13.9" evidence="1"/>
<dbReference type="EMBL" id="CP000880">
    <property type="protein sequence ID" value="ABX23480.1"/>
    <property type="molecule type" value="Genomic_DNA"/>
</dbReference>
<dbReference type="SMR" id="A9MIX1"/>
<dbReference type="STRING" id="41514.SARI_03675"/>
<dbReference type="MEROPS" id="M24.003"/>
<dbReference type="KEGG" id="ses:SARI_03675"/>
<dbReference type="HOGENOM" id="CLU_050675_0_0_6"/>
<dbReference type="Proteomes" id="UP000002084">
    <property type="component" value="Chromosome"/>
</dbReference>
<dbReference type="GO" id="GO:0005829">
    <property type="term" value="C:cytosol"/>
    <property type="evidence" value="ECO:0007669"/>
    <property type="project" value="TreeGrafter"/>
</dbReference>
<dbReference type="GO" id="GO:0004177">
    <property type="term" value="F:aminopeptidase activity"/>
    <property type="evidence" value="ECO:0007669"/>
    <property type="project" value="TreeGrafter"/>
</dbReference>
<dbReference type="GO" id="GO:0046872">
    <property type="term" value="F:metal ion binding"/>
    <property type="evidence" value="ECO:0007669"/>
    <property type="project" value="UniProtKB-KW"/>
</dbReference>
<dbReference type="GO" id="GO:0008235">
    <property type="term" value="F:metalloexopeptidase activity"/>
    <property type="evidence" value="ECO:0007669"/>
    <property type="project" value="UniProtKB-UniRule"/>
</dbReference>
<dbReference type="GO" id="GO:0016795">
    <property type="term" value="F:phosphoric triester hydrolase activity"/>
    <property type="evidence" value="ECO:0007669"/>
    <property type="project" value="InterPro"/>
</dbReference>
<dbReference type="GO" id="GO:0102009">
    <property type="term" value="F:proline dipeptidase activity"/>
    <property type="evidence" value="ECO:0007669"/>
    <property type="project" value="UniProtKB-EC"/>
</dbReference>
<dbReference type="GO" id="GO:0006508">
    <property type="term" value="P:proteolysis"/>
    <property type="evidence" value="ECO:0007669"/>
    <property type="project" value="UniProtKB-KW"/>
</dbReference>
<dbReference type="CDD" id="cd01087">
    <property type="entry name" value="Prolidase"/>
    <property type="match status" value="1"/>
</dbReference>
<dbReference type="FunFam" id="3.40.350.10:FF:000002">
    <property type="entry name" value="Xaa-Pro dipeptidase"/>
    <property type="match status" value="1"/>
</dbReference>
<dbReference type="FunFam" id="3.90.230.10:FF:000006">
    <property type="entry name" value="Xaa-Pro dipeptidase"/>
    <property type="match status" value="1"/>
</dbReference>
<dbReference type="Gene3D" id="3.90.230.10">
    <property type="entry name" value="Creatinase/methionine aminopeptidase superfamily"/>
    <property type="match status" value="1"/>
</dbReference>
<dbReference type="Gene3D" id="3.40.350.10">
    <property type="entry name" value="Creatinase/prolidase N-terminal domain"/>
    <property type="match status" value="1"/>
</dbReference>
<dbReference type="HAMAP" id="MF_01279">
    <property type="entry name" value="X_Pro_dipeptid"/>
    <property type="match status" value="1"/>
</dbReference>
<dbReference type="InterPro" id="IPR029149">
    <property type="entry name" value="Creatin/AminoP/Spt16_N"/>
</dbReference>
<dbReference type="InterPro" id="IPR036005">
    <property type="entry name" value="Creatinase/aminopeptidase-like"/>
</dbReference>
<dbReference type="InterPro" id="IPR048819">
    <property type="entry name" value="PepQ_N"/>
</dbReference>
<dbReference type="InterPro" id="IPR000994">
    <property type="entry name" value="Pept_M24"/>
</dbReference>
<dbReference type="InterPro" id="IPR001131">
    <property type="entry name" value="Peptidase_M24B_aminopep-P_CS"/>
</dbReference>
<dbReference type="InterPro" id="IPR052433">
    <property type="entry name" value="X-Pro_dipept-like"/>
</dbReference>
<dbReference type="InterPro" id="IPR022846">
    <property type="entry name" value="X_Pro_dipept"/>
</dbReference>
<dbReference type="NCBIfam" id="NF010133">
    <property type="entry name" value="PRK13607.1"/>
    <property type="match status" value="1"/>
</dbReference>
<dbReference type="PANTHER" id="PTHR43226">
    <property type="entry name" value="XAA-PRO AMINOPEPTIDASE 3"/>
    <property type="match status" value="1"/>
</dbReference>
<dbReference type="PANTHER" id="PTHR43226:SF8">
    <property type="entry name" value="XAA-PRO DIPEPTIDASE"/>
    <property type="match status" value="1"/>
</dbReference>
<dbReference type="Pfam" id="PF21216">
    <property type="entry name" value="PepQ_N"/>
    <property type="match status" value="1"/>
</dbReference>
<dbReference type="Pfam" id="PF00557">
    <property type="entry name" value="Peptidase_M24"/>
    <property type="match status" value="1"/>
</dbReference>
<dbReference type="SUPFAM" id="SSF55920">
    <property type="entry name" value="Creatinase/aminopeptidase"/>
    <property type="match status" value="1"/>
</dbReference>
<dbReference type="PROSITE" id="PS00491">
    <property type="entry name" value="PROLINE_PEPTIDASE"/>
    <property type="match status" value="1"/>
</dbReference>
<organism>
    <name type="scientific">Salmonella arizonae (strain ATCC BAA-731 / CDC346-86 / RSK2980)</name>
    <dbReference type="NCBI Taxonomy" id="41514"/>
    <lineage>
        <taxon>Bacteria</taxon>
        <taxon>Pseudomonadati</taxon>
        <taxon>Pseudomonadota</taxon>
        <taxon>Gammaproteobacteria</taxon>
        <taxon>Enterobacterales</taxon>
        <taxon>Enterobacteriaceae</taxon>
        <taxon>Salmonella</taxon>
    </lineage>
</organism>
<name>PEPQ_SALAR</name>
<protein>
    <recommendedName>
        <fullName evidence="1">Xaa-Pro dipeptidase</fullName>
        <shortName evidence="1">X-Pro dipeptidase</shortName>
        <ecNumber evidence="1">3.4.13.9</ecNumber>
    </recommendedName>
    <alternativeName>
        <fullName evidence="1">Imidodipeptidase</fullName>
    </alternativeName>
    <alternativeName>
        <fullName evidence="1">Proline dipeptidase</fullName>
        <shortName evidence="1">Prolidase</shortName>
    </alternativeName>
</protein>
<gene>
    <name evidence="1" type="primary">pepQ</name>
    <name type="ordered locus">SARI_03675</name>
</gene>
<feature type="chain" id="PRO_1000085884" description="Xaa-Pro dipeptidase">
    <location>
        <begin position="1"/>
        <end position="443"/>
    </location>
</feature>
<feature type="binding site" evidence="1">
    <location>
        <position position="246"/>
    </location>
    <ligand>
        <name>Mn(2+)</name>
        <dbReference type="ChEBI" id="CHEBI:29035"/>
        <label>2</label>
    </ligand>
</feature>
<feature type="binding site" evidence="1">
    <location>
        <position position="257"/>
    </location>
    <ligand>
        <name>Mn(2+)</name>
        <dbReference type="ChEBI" id="CHEBI:29035"/>
        <label>1</label>
    </ligand>
</feature>
<feature type="binding site" evidence="1">
    <location>
        <position position="257"/>
    </location>
    <ligand>
        <name>Mn(2+)</name>
        <dbReference type="ChEBI" id="CHEBI:29035"/>
        <label>2</label>
    </ligand>
</feature>
<feature type="binding site" evidence="1">
    <location>
        <position position="339"/>
    </location>
    <ligand>
        <name>Mn(2+)</name>
        <dbReference type="ChEBI" id="CHEBI:29035"/>
        <label>1</label>
    </ligand>
</feature>
<feature type="binding site" evidence="1">
    <location>
        <position position="384"/>
    </location>
    <ligand>
        <name>Mn(2+)</name>
        <dbReference type="ChEBI" id="CHEBI:29035"/>
        <label>1</label>
    </ligand>
</feature>
<feature type="binding site" evidence="1">
    <location>
        <position position="423"/>
    </location>
    <ligand>
        <name>Mn(2+)</name>
        <dbReference type="ChEBI" id="CHEBI:29035"/>
        <label>1</label>
    </ligand>
</feature>
<feature type="binding site" evidence="1">
    <location>
        <position position="423"/>
    </location>
    <ligand>
        <name>Mn(2+)</name>
        <dbReference type="ChEBI" id="CHEBI:29035"/>
        <label>2</label>
    </ligand>
</feature>